<name>Y5909_MYXXD</name>
<evidence type="ECO:0000250" key="1"/>
<evidence type="ECO:0000255" key="2">
    <source>
        <dbReference type="PROSITE-ProRule" id="PRU10001"/>
    </source>
</evidence>
<evidence type="ECO:0000305" key="3"/>
<sequence length="253" mass="26969">MAEMSYRTALVTGASSGLGRGLALWLARRGVRVFAAGRRLPQLQALRDEAQAAGVTVEPVELDVTKADATLERIRALDAEAGGLDLVVANAGVGGTTNAKRLPWERVRGIIDTNVTGAAATLSAVLPQMVERKRGHLVGVSSLAGFRGLAGHAAYSASKAFLSTFMESLRVDLRGTGVRVTCIYPGFVKSELTATNNFPMPFLMETHDAVELMGKGIVRGDAEVSFPWQLAVPTRMAKVLPNPLFDAAARRLR</sequence>
<dbReference type="EC" id="1.-.-.-"/>
<dbReference type="EMBL" id="M79325">
    <property type="status" value="NOT_ANNOTATED_CDS"/>
    <property type="molecule type" value="Genomic_DNA"/>
</dbReference>
<dbReference type="EMBL" id="CP000113">
    <property type="protein sequence ID" value="ABF86550.1"/>
    <property type="molecule type" value="Genomic_DNA"/>
</dbReference>
<dbReference type="RefSeq" id="WP_011555860.1">
    <property type="nucleotide sequence ID" value="NC_008095.1"/>
</dbReference>
<dbReference type="SMR" id="P25970"/>
<dbReference type="STRING" id="246197.MXAN_5909"/>
<dbReference type="EnsemblBacteria" id="ABF86550">
    <property type="protein sequence ID" value="ABF86550"/>
    <property type="gene ID" value="MXAN_5909"/>
</dbReference>
<dbReference type="GeneID" id="41363147"/>
<dbReference type="KEGG" id="mxa:MXAN_5909"/>
<dbReference type="eggNOG" id="COG0300">
    <property type="taxonomic scope" value="Bacteria"/>
</dbReference>
<dbReference type="HOGENOM" id="CLU_010194_2_1_7"/>
<dbReference type="OrthoDB" id="658698at2"/>
<dbReference type="Proteomes" id="UP000002402">
    <property type="component" value="Chromosome"/>
</dbReference>
<dbReference type="GO" id="GO:0016020">
    <property type="term" value="C:membrane"/>
    <property type="evidence" value="ECO:0007669"/>
    <property type="project" value="TreeGrafter"/>
</dbReference>
<dbReference type="GO" id="GO:0016491">
    <property type="term" value="F:oxidoreductase activity"/>
    <property type="evidence" value="ECO:0007669"/>
    <property type="project" value="UniProtKB-KW"/>
</dbReference>
<dbReference type="CDD" id="cd05350">
    <property type="entry name" value="SDR_c6"/>
    <property type="match status" value="1"/>
</dbReference>
<dbReference type="Gene3D" id="3.40.50.720">
    <property type="entry name" value="NAD(P)-binding Rossmann-like Domain"/>
    <property type="match status" value="1"/>
</dbReference>
<dbReference type="InterPro" id="IPR036291">
    <property type="entry name" value="NAD(P)-bd_dom_sf"/>
</dbReference>
<dbReference type="InterPro" id="IPR020904">
    <property type="entry name" value="Sc_DH/Rdtase_CS"/>
</dbReference>
<dbReference type="InterPro" id="IPR002347">
    <property type="entry name" value="SDR_fam"/>
</dbReference>
<dbReference type="PANTHER" id="PTHR44196">
    <property type="entry name" value="DEHYDROGENASE/REDUCTASE SDR FAMILY MEMBER 7B"/>
    <property type="match status" value="1"/>
</dbReference>
<dbReference type="PANTHER" id="PTHR44196:SF3">
    <property type="entry name" value="SHORT CHAIN DEHYDROGENASE FAMILY PROTEIN"/>
    <property type="match status" value="1"/>
</dbReference>
<dbReference type="Pfam" id="PF00106">
    <property type="entry name" value="adh_short"/>
    <property type="match status" value="1"/>
</dbReference>
<dbReference type="PRINTS" id="PR00081">
    <property type="entry name" value="GDHRDH"/>
</dbReference>
<dbReference type="PRINTS" id="PR00080">
    <property type="entry name" value="SDRFAMILY"/>
</dbReference>
<dbReference type="SMART" id="SM00822">
    <property type="entry name" value="PKS_KR"/>
    <property type="match status" value="1"/>
</dbReference>
<dbReference type="SUPFAM" id="SSF51735">
    <property type="entry name" value="NAD(P)-binding Rossmann-fold domains"/>
    <property type="match status" value="1"/>
</dbReference>
<dbReference type="PROSITE" id="PS00061">
    <property type="entry name" value="ADH_SHORT"/>
    <property type="match status" value="1"/>
</dbReference>
<organism>
    <name type="scientific">Myxococcus xanthus (strain DK1622)</name>
    <dbReference type="NCBI Taxonomy" id="246197"/>
    <lineage>
        <taxon>Bacteria</taxon>
        <taxon>Pseudomonadati</taxon>
        <taxon>Myxococcota</taxon>
        <taxon>Myxococcia</taxon>
        <taxon>Myxococcales</taxon>
        <taxon>Cystobacterineae</taxon>
        <taxon>Myxococcaceae</taxon>
        <taxon>Myxococcus</taxon>
    </lineage>
</organism>
<feature type="chain" id="PRO_0000054891" description="Uncharacterized oxidoreductase MXAN_5909">
    <location>
        <begin position="1"/>
        <end position="253"/>
    </location>
</feature>
<feature type="active site" description="Proton acceptor" evidence="2">
    <location>
        <position position="155"/>
    </location>
</feature>
<feature type="binding site" evidence="1">
    <location>
        <begin position="10"/>
        <end position="34"/>
    </location>
    <ligand>
        <name>NADP(+)</name>
        <dbReference type="ChEBI" id="CHEBI:58349"/>
    </ligand>
</feature>
<feature type="binding site" evidence="1">
    <location>
        <position position="142"/>
    </location>
    <ligand>
        <name>substrate</name>
    </ligand>
</feature>
<feature type="sequence conflict" description="In Ref. 1." evidence="3" ref="1">
    <original>LR</original>
    <variation>A</variation>
    <location>
        <begin position="46"/>
        <end position="47"/>
    </location>
</feature>
<feature type="sequence conflict" description="In Ref. 1." evidence="3" ref="1">
    <original>QAAGVTVEPVEL</original>
    <variation>PGGRRHRGARGV</variation>
    <location>
        <begin position="51"/>
        <end position="62"/>
    </location>
</feature>
<feature type="sequence conflict" description="In Ref. 1." evidence="3" ref="1">
    <original>AGHAA</original>
    <variation>PATR</variation>
    <location>
        <begin position="150"/>
        <end position="154"/>
    </location>
</feature>
<proteinExistence type="inferred from homology"/>
<reference key="1">
    <citation type="journal article" date="1992" name="J. Biol. Chem.">
        <title>The orotidine-5'-monophosphate decarboxylase gene of Myxococcus xanthus. Comparison to the OMP decarboxylase gene family.</title>
        <authorList>
            <person name="Kimsey H.H."/>
            <person name="Kaiser D."/>
        </authorList>
    </citation>
    <scope>NUCLEOTIDE SEQUENCE [GENOMIC DNA]</scope>
</reference>
<reference key="2">
    <citation type="journal article" date="2006" name="Proc. Natl. Acad. Sci. U.S.A.">
        <title>Evolution of sensory complexity recorded in a myxobacterial genome.</title>
        <authorList>
            <person name="Goldman B.S."/>
            <person name="Nierman W.C."/>
            <person name="Kaiser D."/>
            <person name="Slater S.C."/>
            <person name="Durkin A.S."/>
            <person name="Eisen J.A."/>
            <person name="Ronning C.M."/>
            <person name="Barbazuk W.B."/>
            <person name="Blanchard M."/>
            <person name="Field C."/>
            <person name="Halling C."/>
            <person name="Hinkle G."/>
            <person name="Iartchuk O."/>
            <person name="Kim H.S."/>
            <person name="Mackenzie C."/>
            <person name="Madupu R."/>
            <person name="Miller N."/>
            <person name="Shvartsbeyn A."/>
            <person name="Sullivan S.A."/>
            <person name="Vaudin M."/>
            <person name="Wiegand R."/>
            <person name="Kaplan H.B."/>
        </authorList>
    </citation>
    <scope>NUCLEOTIDE SEQUENCE [LARGE SCALE GENOMIC DNA]</scope>
    <source>
        <strain>DK1622</strain>
    </source>
</reference>
<protein>
    <recommendedName>
        <fullName>Uncharacterized oxidoreductase MXAN_5909</fullName>
        <ecNumber>1.-.-.-</ecNumber>
    </recommendedName>
</protein>
<accession>P25970</accession>
<accession>Q1CZX7</accession>
<comment type="similarity">
    <text evidence="3">Belongs to the short-chain dehydrogenases/reductases (SDR) family.</text>
</comment>
<comment type="sequence caution" evidence="3">
    <conflict type="frameshift">
        <sequence resource="EMBL" id="M79325"/>
    </conflict>
</comment>
<gene>
    <name type="ordered locus">MXAN_5909</name>
</gene>
<keyword id="KW-0560">Oxidoreductase</keyword>
<keyword id="KW-1185">Reference proteome</keyword>